<dbReference type="EMBL" id="CP000151">
    <property type="protein sequence ID" value="ABB07644.1"/>
    <property type="molecule type" value="Genomic_DNA"/>
</dbReference>
<dbReference type="RefSeq" id="WP_011351225.1">
    <property type="nucleotide sequence ID" value="NZ_WNDV01000014.1"/>
</dbReference>
<dbReference type="SMR" id="Q39IS2"/>
<dbReference type="GeneID" id="93146055"/>
<dbReference type="KEGG" id="bur:Bcep18194_A4047"/>
<dbReference type="PATRIC" id="fig|482957.22.peg.926"/>
<dbReference type="HOGENOM" id="CLU_114342_3_3_4"/>
<dbReference type="Proteomes" id="UP000002705">
    <property type="component" value="Chromosome 1"/>
</dbReference>
<dbReference type="GO" id="GO:0005886">
    <property type="term" value="C:plasma membrane"/>
    <property type="evidence" value="ECO:0007669"/>
    <property type="project" value="UniProtKB-SubCell"/>
</dbReference>
<dbReference type="GO" id="GO:0062054">
    <property type="term" value="F:fluoride channel activity"/>
    <property type="evidence" value="ECO:0007669"/>
    <property type="project" value="UniProtKB-UniRule"/>
</dbReference>
<dbReference type="GO" id="GO:0046872">
    <property type="term" value="F:metal ion binding"/>
    <property type="evidence" value="ECO:0007669"/>
    <property type="project" value="UniProtKB-KW"/>
</dbReference>
<dbReference type="GO" id="GO:0140114">
    <property type="term" value="P:cellular detoxification of fluoride"/>
    <property type="evidence" value="ECO:0007669"/>
    <property type="project" value="UniProtKB-UniRule"/>
</dbReference>
<dbReference type="HAMAP" id="MF_00454">
    <property type="entry name" value="FluC"/>
    <property type="match status" value="1"/>
</dbReference>
<dbReference type="InterPro" id="IPR003691">
    <property type="entry name" value="FluC"/>
</dbReference>
<dbReference type="NCBIfam" id="TIGR00494">
    <property type="entry name" value="crcB"/>
    <property type="match status" value="1"/>
</dbReference>
<dbReference type="NCBIfam" id="NF010792">
    <property type="entry name" value="PRK14196.1"/>
    <property type="match status" value="1"/>
</dbReference>
<dbReference type="PANTHER" id="PTHR28259">
    <property type="entry name" value="FLUORIDE EXPORT PROTEIN 1-RELATED"/>
    <property type="match status" value="1"/>
</dbReference>
<dbReference type="PANTHER" id="PTHR28259:SF1">
    <property type="entry name" value="FLUORIDE EXPORT PROTEIN 1-RELATED"/>
    <property type="match status" value="1"/>
</dbReference>
<dbReference type="Pfam" id="PF02537">
    <property type="entry name" value="CRCB"/>
    <property type="match status" value="1"/>
</dbReference>
<gene>
    <name evidence="1" type="primary">fluC</name>
    <name evidence="1" type="synonym">crcB</name>
    <name type="ordered locus">Bcep18194_A4047</name>
</gene>
<accession>Q39IS2</accession>
<feature type="chain" id="PRO_0000252862" description="Fluoride-specific ion channel FluC">
    <location>
        <begin position="1"/>
        <end position="128"/>
    </location>
</feature>
<feature type="transmembrane region" description="Helical" evidence="1">
    <location>
        <begin position="5"/>
        <end position="25"/>
    </location>
</feature>
<feature type="transmembrane region" description="Helical" evidence="1">
    <location>
        <begin position="35"/>
        <end position="55"/>
    </location>
</feature>
<feature type="transmembrane region" description="Helical" evidence="1">
    <location>
        <begin position="67"/>
        <end position="87"/>
    </location>
</feature>
<feature type="transmembrane region" description="Helical" evidence="1">
    <location>
        <begin position="96"/>
        <end position="116"/>
    </location>
</feature>
<feature type="binding site" evidence="1">
    <location>
        <position position="75"/>
    </location>
    <ligand>
        <name>Na(+)</name>
        <dbReference type="ChEBI" id="CHEBI:29101"/>
        <note>structural</note>
    </ligand>
</feature>
<feature type="binding site" evidence="1">
    <location>
        <position position="78"/>
    </location>
    <ligand>
        <name>Na(+)</name>
        <dbReference type="ChEBI" id="CHEBI:29101"/>
        <note>structural</note>
    </ligand>
</feature>
<protein>
    <recommendedName>
        <fullName evidence="1">Fluoride-specific ion channel FluC</fullName>
    </recommendedName>
</protein>
<reference key="1">
    <citation type="submission" date="2005-10" db="EMBL/GenBank/DDBJ databases">
        <title>Complete sequence of chromosome 1 of Burkholderia sp. 383.</title>
        <authorList>
            <consortium name="US DOE Joint Genome Institute"/>
            <person name="Copeland A."/>
            <person name="Lucas S."/>
            <person name="Lapidus A."/>
            <person name="Barry K."/>
            <person name="Detter J.C."/>
            <person name="Glavina T."/>
            <person name="Hammon N."/>
            <person name="Israni S."/>
            <person name="Pitluck S."/>
            <person name="Chain P."/>
            <person name="Malfatti S."/>
            <person name="Shin M."/>
            <person name="Vergez L."/>
            <person name="Schmutz J."/>
            <person name="Larimer F."/>
            <person name="Land M."/>
            <person name="Kyrpides N."/>
            <person name="Lykidis A."/>
            <person name="Richardson P."/>
        </authorList>
    </citation>
    <scope>NUCLEOTIDE SEQUENCE [LARGE SCALE GENOMIC DNA]</scope>
    <source>
        <strain>ATCC 17760 / DSM 23089 / LMG 22485 / NCIMB 9086 / R18194 / 383</strain>
    </source>
</reference>
<comment type="function">
    <text evidence="1">Fluoride-specific ion channel. Important for reducing fluoride concentration in the cell, thus reducing its toxicity.</text>
</comment>
<comment type="catalytic activity">
    <reaction evidence="1">
        <text>fluoride(in) = fluoride(out)</text>
        <dbReference type="Rhea" id="RHEA:76159"/>
        <dbReference type="ChEBI" id="CHEBI:17051"/>
    </reaction>
    <physiologicalReaction direction="left-to-right" evidence="1">
        <dbReference type="Rhea" id="RHEA:76160"/>
    </physiologicalReaction>
</comment>
<comment type="activity regulation">
    <text evidence="1">Na(+) is not transported, but it plays an essential structural role and its presence is essential for fluoride channel function.</text>
</comment>
<comment type="subcellular location">
    <subcellularLocation>
        <location evidence="1">Cell inner membrane</location>
        <topology evidence="1">Multi-pass membrane protein</topology>
    </subcellularLocation>
</comment>
<comment type="similarity">
    <text evidence="1">Belongs to the fluoride channel Fluc/FEX (TC 1.A.43) family.</text>
</comment>
<proteinExistence type="inferred from homology"/>
<sequence>MFYSIVAIFVGAGLGALLRWFLSLALNEFFPAVPLGTLAANLIGGYVIGIAAVVFTTRVGLPPEWRLFVITGFLGGLTTFSTYSVEVMTHAVQGEFGWAFAVAALHLTGSFALTALGMWTARAWLAAA</sequence>
<name>FLUC_BURL3</name>
<keyword id="KW-0997">Cell inner membrane</keyword>
<keyword id="KW-1003">Cell membrane</keyword>
<keyword id="KW-0407">Ion channel</keyword>
<keyword id="KW-0406">Ion transport</keyword>
<keyword id="KW-0472">Membrane</keyword>
<keyword id="KW-0479">Metal-binding</keyword>
<keyword id="KW-0915">Sodium</keyword>
<keyword id="KW-0812">Transmembrane</keyword>
<keyword id="KW-1133">Transmembrane helix</keyword>
<keyword id="KW-0813">Transport</keyword>
<organism>
    <name type="scientific">Burkholderia lata (strain ATCC 17760 / DSM 23089 / LMG 22485 / NCIMB 9086 / R18194 / 383)</name>
    <dbReference type="NCBI Taxonomy" id="482957"/>
    <lineage>
        <taxon>Bacteria</taxon>
        <taxon>Pseudomonadati</taxon>
        <taxon>Pseudomonadota</taxon>
        <taxon>Betaproteobacteria</taxon>
        <taxon>Burkholderiales</taxon>
        <taxon>Burkholderiaceae</taxon>
        <taxon>Burkholderia</taxon>
        <taxon>Burkholderia cepacia complex</taxon>
    </lineage>
</organism>
<evidence type="ECO:0000255" key="1">
    <source>
        <dbReference type="HAMAP-Rule" id="MF_00454"/>
    </source>
</evidence>